<evidence type="ECO:0000255" key="1">
    <source>
        <dbReference type="HAMAP-Rule" id="MF_01416"/>
    </source>
</evidence>
<proteinExistence type="inferred from homology"/>
<accession>A6TG39</accession>
<dbReference type="EMBL" id="CP000647">
    <property type="protein sequence ID" value="ABR79523.1"/>
    <property type="molecule type" value="Genomic_DNA"/>
</dbReference>
<dbReference type="RefSeq" id="WP_004144994.1">
    <property type="nucleotide sequence ID" value="NC_009648.1"/>
</dbReference>
<dbReference type="SMR" id="A6TG39"/>
<dbReference type="STRING" id="272620.KPN_04140"/>
<dbReference type="jPOST" id="A6TG39"/>
<dbReference type="PaxDb" id="272620-KPN_04140"/>
<dbReference type="EnsemblBacteria" id="ABR79523">
    <property type="protein sequence ID" value="ABR79523"/>
    <property type="gene ID" value="KPN_04140"/>
</dbReference>
<dbReference type="KEGG" id="kpn:KPN_04140"/>
<dbReference type="HOGENOM" id="CLU_085114_3_0_6"/>
<dbReference type="Proteomes" id="UP000000265">
    <property type="component" value="Chromosome"/>
</dbReference>
<dbReference type="GO" id="GO:0005886">
    <property type="term" value="C:plasma membrane"/>
    <property type="evidence" value="ECO:0007669"/>
    <property type="project" value="UniProtKB-SubCell"/>
</dbReference>
<dbReference type="GO" id="GO:0045259">
    <property type="term" value="C:proton-transporting ATP synthase complex"/>
    <property type="evidence" value="ECO:0007669"/>
    <property type="project" value="UniProtKB-KW"/>
</dbReference>
<dbReference type="GO" id="GO:0046933">
    <property type="term" value="F:proton-transporting ATP synthase activity, rotational mechanism"/>
    <property type="evidence" value="ECO:0007669"/>
    <property type="project" value="UniProtKB-UniRule"/>
</dbReference>
<dbReference type="FunFam" id="1.10.520.20:FF:000001">
    <property type="entry name" value="ATP synthase subunit delta"/>
    <property type="match status" value="1"/>
</dbReference>
<dbReference type="Gene3D" id="1.10.520.20">
    <property type="entry name" value="N-terminal domain of the delta subunit of the F1F0-ATP synthase"/>
    <property type="match status" value="1"/>
</dbReference>
<dbReference type="HAMAP" id="MF_01416">
    <property type="entry name" value="ATP_synth_delta_bact"/>
    <property type="match status" value="1"/>
</dbReference>
<dbReference type="InterPro" id="IPR026015">
    <property type="entry name" value="ATP_synth_OSCP/delta_N_sf"/>
</dbReference>
<dbReference type="InterPro" id="IPR020781">
    <property type="entry name" value="ATPase_OSCP/d_CS"/>
</dbReference>
<dbReference type="InterPro" id="IPR000711">
    <property type="entry name" value="ATPase_OSCP/dsu"/>
</dbReference>
<dbReference type="NCBIfam" id="TIGR01145">
    <property type="entry name" value="ATP_synt_delta"/>
    <property type="match status" value="1"/>
</dbReference>
<dbReference type="NCBIfam" id="NF004402">
    <property type="entry name" value="PRK05758.2-2"/>
    <property type="match status" value="1"/>
</dbReference>
<dbReference type="NCBIfam" id="NF004404">
    <property type="entry name" value="PRK05758.2-5"/>
    <property type="match status" value="1"/>
</dbReference>
<dbReference type="PANTHER" id="PTHR11910">
    <property type="entry name" value="ATP SYNTHASE DELTA CHAIN"/>
    <property type="match status" value="1"/>
</dbReference>
<dbReference type="Pfam" id="PF00213">
    <property type="entry name" value="OSCP"/>
    <property type="match status" value="1"/>
</dbReference>
<dbReference type="PRINTS" id="PR00125">
    <property type="entry name" value="ATPASEDELTA"/>
</dbReference>
<dbReference type="SUPFAM" id="SSF47928">
    <property type="entry name" value="N-terminal domain of the delta subunit of the F1F0-ATP synthase"/>
    <property type="match status" value="1"/>
</dbReference>
<dbReference type="PROSITE" id="PS00389">
    <property type="entry name" value="ATPASE_DELTA"/>
    <property type="match status" value="1"/>
</dbReference>
<gene>
    <name evidence="1" type="primary">atpH</name>
    <name type="ordered locus">KPN78578_40990</name>
    <name type="ORF">KPN_04140</name>
</gene>
<name>ATPD_KLEP7</name>
<organism>
    <name type="scientific">Klebsiella pneumoniae subsp. pneumoniae (strain ATCC 700721 / MGH 78578)</name>
    <dbReference type="NCBI Taxonomy" id="272620"/>
    <lineage>
        <taxon>Bacteria</taxon>
        <taxon>Pseudomonadati</taxon>
        <taxon>Pseudomonadota</taxon>
        <taxon>Gammaproteobacteria</taxon>
        <taxon>Enterobacterales</taxon>
        <taxon>Enterobacteriaceae</taxon>
        <taxon>Klebsiella/Raoultella group</taxon>
        <taxon>Klebsiella</taxon>
        <taxon>Klebsiella pneumoniae complex</taxon>
    </lineage>
</organism>
<reference key="1">
    <citation type="submission" date="2006-09" db="EMBL/GenBank/DDBJ databases">
        <authorList>
            <consortium name="The Klebsiella pneumonia Genome Sequencing Project"/>
            <person name="McClelland M."/>
            <person name="Sanderson E.K."/>
            <person name="Spieth J."/>
            <person name="Clifton W.S."/>
            <person name="Latreille P."/>
            <person name="Sabo A."/>
            <person name="Pepin K."/>
            <person name="Bhonagiri V."/>
            <person name="Porwollik S."/>
            <person name="Ali J."/>
            <person name="Wilson R.K."/>
        </authorList>
    </citation>
    <scope>NUCLEOTIDE SEQUENCE [LARGE SCALE GENOMIC DNA]</scope>
    <source>
        <strain>ATCC 700721 / MGH 78578</strain>
    </source>
</reference>
<comment type="function">
    <text evidence="1">F(1)F(0) ATP synthase produces ATP from ADP in the presence of a proton or sodium gradient. F-type ATPases consist of two structural domains, F(1) containing the extramembraneous catalytic core and F(0) containing the membrane proton channel, linked together by a central stalk and a peripheral stalk. During catalysis, ATP synthesis in the catalytic domain of F(1) is coupled via a rotary mechanism of the central stalk subunits to proton translocation.</text>
</comment>
<comment type="function">
    <text evidence="1">This protein is part of the stalk that links CF(0) to CF(1). It either transmits conformational changes from CF(0) to CF(1) or is implicated in proton conduction.</text>
</comment>
<comment type="subunit">
    <text evidence="1">F-type ATPases have 2 components, F(1) - the catalytic core - and F(0) - the membrane proton channel. F(1) has five subunits: alpha(3), beta(3), gamma(1), delta(1), epsilon(1). F(0) has three main subunits: a(1), b(2) and c(10-14). The alpha and beta chains form an alternating ring which encloses part of the gamma chain. F(1) is attached to F(0) by a central stalk formed by the gamma and epsilon chains, while a peripheral stalk is formed by the delta and b chains.</text>
</comment>
<comment type="subcellular location">
    <subcellularLocation>
        <location evidence="1">Cell inner membrane</location>
        <topology evidence="1">Peripheral membrane protein</topology>
    </subcellularLocation>
</comment>
<comment type="similarity">
    <text evidence="1">Belongs to the ATPase delta chain family.</text>
</comment>
<keyword id="KW-0066">ATP synthesis</keyword>
<keyword id="KW-0997">Cell inner membrane</keyword>
<keyword id="KW-1003">Cell membrane</keyword>
<keyword id="KW-0139">CF(1)</keyword>
<keyword id="KW-0375">Hydrogen ion transport</keyword>
<keyword id="KW-0406">Ion transport</keyword>
<keyword id="KW-0472">Membrane</keyword>
<keyword id="KW-0813">Transport</keyword>
<feature type="chain" id="PRO_0000371006" description="ATP synthase subunit delta">
    <location>
        <begin position="1"/>
        <end position="177"/>
    </location>
</feature>
<sequence length="177" mass="19530">MSEFVTVARPYAKAAFDFAVEHNSVERWQDMLAFAAEVTKNDQMAELLSGALAPETLSEAFIAICGEQLDENGQNLIKVMAENNRLKVLPDVLEQFIHLRAASEAIAEVEVISANQLSDEQLARIVSAMEKRLSRKVKLNCKIDKSVMAGIIIRAGDMVIDGSVRGRLERLADVLQS</sequence>
<protein>
    <recommendedName>
        <fullName evidence="1">ATP synthase subunit delta</fullName>
    </recommendedName>
    <alternativeName>
        <fullName evidence="1">ATP synthase F(1) sector subunit delta</fullName>
    </alternativeName>
    <alternativeName>
        <fullName evidence="1">F-type ATPase subunit delta</fullName>
        <shortName evidence="1">F-ATPase subunit delta</shortName>
    </alternativeName>
</protein>